<keyword id="KW-0963">Cytoplasm</keyword>
<keyword id="KW-0489">Methyltransferase</keyword>
<keyword id="KW-0545">Nucleotide biosynthesis</keyword>
<keyword id="KW-0808">Transferase</keyword>
<proteinExistence type="inferred from homology"/>
<reference key="1">
    <citation type="journal article" date="2009" name="Genome Biol.">
        <title>Genomic and genetic analyses of diversity and plant interactions of Pseudomonas fluorescens.</title>
        <authorList>
            <person name="Silby M.W."/>
            <person name="Cerdeno-Tarraga A.M."/>
            <person name="Vernikos G.S."/>
            <person name="Giddens S.R."/>
            <person name="Jackson R.W."/>
            <person name="Preston G.M."/>
            <person name="Zhang X.-X."/>
            <person name="Moon C.D."/>
            <person name="Gehrig S.M."/>
            <person name="Godfrey S.A.C."/>
            <person name="Knight C.G."/>
            <person name="Malone J.G."/>
            <person name="Robinson Z."/>
            <person name="Spiers A.J."/>
            <person name="Harris S."/>
            <person name="Challis G.L."/>
            <person name="Yaxley A.M."/>
            <person name="Harris D."/>
            <person name="Seeger K."/>
            <person name="Murphy L."/>
            <person name="Rutter S."/>
            <person name="Squares R."/>
            <person name="Quail M.A."/>
            <person name="Saunders E."/>
            <person name="Mavromatis K."/>
            <person name="Brettin T.S."/>
            <person name="Bentley S.D."/>
            <person name="Hothersall J."/>
            <person name="Stephens E."/>
            <person name="Thomas C.M."/>
            <person name="Parkhill J."/>
            <person name="Levy S.B."/>
            <person name="Rainey P.B."/>
            <person name="Thomson N.R."/>
        </authorList>
    </citation>
    <scope>NUCLEOTIDE SEQUENCE [LARGE SCALE GENOMIC DNA]</scope>
    <source>
        <strain>SBW25</strain>
    </source>
</reference>
<organism>
    <name type="scientific">Pseudomonas fluorescens (strain SBW25)</name>
    <dbReference type="NCBI Taxonomy" id="216595"/>
    <lineage>
        <taxon>Bacteria</taxon>
        <taxon>Pseudomonadati</taxon>
        <taxon>Pseudomonadota</taxon>
        <taxon>Gammaproteobacteria</taxon>
        <taxon>Pseudomonadales</taxon>
        <taxon>Pseudomonadaceae</taxon>
        <taxon>Pseudomonas</taxon>
    </lineage>
</organism>
<name>TYSY_PSEFS</name>
<feature type="chain" id="PRO_1000201724" description="Thymidylate synthase">
    <location>
        <begin position="1"/>
        <end position="277"/>
    </location>
</feature>
<feature type="active site" description="Nucleophile" evidence="1">
    <location>
        <position position="159"/>
    </location>
</feature>
<feature type="binding site" description="in other chain" evidence="1">
    <location>
        <position position="21"/>
    </location>
    <ligand>
        <name>dUMP</name>
        <dbReference type="ChEBI" id="CHEBI:246422"/>
        <note>ligand shared between dimeric partners</note>
    </ligand>
</feature>
<feature type="binding site" evidence="1">
    <location>
        <position position="51"/>
    </location>
    <ligand>
        <name>(6R)-5,10-methylene-5,6,7,8-tetrahydrofolate</name>
        <dbReference type="ChEBI" id="CHEBI:15636"/>
    </ligand>
</feature>
<feature type="binding site" evidence="1">
    <location>
        <begin position="126"/>
        <end position="127"/>
    </location>
    <ligand>
        <name>dUMP</name>
        <dbReference type="ChEBI" id="CHEBI:246422"/>
        <note>ligand shared between dimeric partners</note>
    </ligand>
</feature>
<feature type="binding site" description="in other chain" evidence="1">
    <location>
        <begin position="179"/>
        <end position="182"/>
    </location>
    <ligand>
        <name>dUMP</name>
        <dbReference type="ChEBI" id="CHEBI:246422"/>
        <note>ligand shared between dimeric partners</note>
    </ligand>
</feature>
<feature type="binding site" evidence="1">
    <location>
        <position position="182"/>
    </location>
    <ligand>
        <name>(6R)-5,10-methylene-5,6,7,8-tetrahydrofolate</name>
        <dbReference type="ChEBI" id="CHEBI:15636"/>
    </ligand>
</feature>
<feature type="binding site" description="in other chain" evidence="1">
    <location>
        <position position="190"/>
    </location>
    <ligand>
        <name>dUMP</name>
        <dbReference type="ChEBI" id="CHEBI:246422"/>
        <note>ligand shared between dimeric partners</note>
    </ligand>
</feature>
<feature type="binding site" description="in other chain" evidence="1">
    <location>
        <begin position="220"/>
        <end position="222"/>
    </location>
    <ligand>
        <name>dUMP</name>
        <dbReference type="ChEBI" id="CHEBI:246422"/>
        <note>ligand shared between dimeric partners</note>
    </ligand>
</feature>
<feature type="binding site" evidence="1">
    <location>
        <position position="276"/>
    </location>
    <ligand>
        <name>(6R)-5,10-methylene-5,6,7,8-tetrahydrofolate</name>
        <dbReference type="ChEBI" id="CHEBI:15636"/>
    </ligand>
</feature>
<accession>C3K3Q8</accession>
<gene>
    <name evidence="1" type="primary">thyA</name>
    <name type="ordered locus">PFLU_5815</name>
</gene>
<sequence length="277" mass="31510">MKQYLELLNDVVTNGLTKGDRTGTGTKAVFARQYRHNLADGFPLLTTKKLHFKSIANELIWMLSGNTNIKWLNENGVKIWDEWATEDGDLGPVYGEQWTAWPTKDGGTINQIDYMVHTLKTNPNSRRILFHGWNVEYLPDETKSPQENARNGKQALPPCHLLYQAFVHDGHLSMQLYIRSSDVFLGLPYNTAALALLTHMLAQQCDLIPHEIIVTTGDTHAYSNHMEQIRTQLARTPKKLPELVIKRKPASIYDYKFEDFEIVGYDADPSIKADVAI</sequence>
<dbReference type="EC" id="2.1.1.45" evidence="1"/>
<dbReference type="EMBL" id="AM181176">
    <property type="protein sequence ID" value="CAY53232.1"/>
    <property type="molecule type" value="Genomic_DNA"/>
</dbReference>
<dbReference type="RefSeq" id="WP_015886389.1">
    <property type="nucleotide sequence ID" value="NC_012660.1"/>
</dbReference>
<dbReference type="SMR" id="C3K3Q8"/>
<dbReference type="eggNOG" id="COG0207">
    <property type="taxonomic scope" value="Bacteria"/>
</dbReference>
<dbReference type="HOGENOM" id="CLU_021669_0_0_6"/>
<dbReference type="OrthoDB" id="9774633at2"/>
<dbReference type="UniPathway" id="UPA00575"/>
<dbReference type="GO" id="GO:0005829">
    <property type="term" value="C:cytosol"/>
    <property type="evidence" value="ECO:0007669"/>
    <property type="project" value="TreeGrafter"/>
</dbReference>
<dbReference type="GO" id="GO:0004799">
    <property type="term" value="F:thymidylate synthase activity"/>
    <property type="evidence" value="ECO:0007669"/>
    <property type="project" value="UniProtKB-UniRule"/>
</dbReference>
<dbReference type="GO" id="GO:0006231">
    <property type="term" value="P:dTMP biosynthetic process"/>
    <property type="evidence" value="ECO:0007669"/>
    <property type="project" value="UniProtKB-UniRule"/>
</dbReference>
<dbReference type="GO" id="GO:0006235">
    <property type="term" value="P:dTTP biosynthetic process"/>
    <property type="evidence" value="ECO:0007669"/>
    <property type="project" value="UniProtKB-UniRule"/>
</dbReference>
<dbReference type="GO" id="GO:0032259">
    <property type="term" value="P:methylation"/>
    <property type="evidence" value="ECO:0007669"/>
    <property type="project" value="UniProtKB-KW"/>
</dbReference>
<dbReference type="CDD" id="cd00351">
    <property type="entry name" value="TS_Pyrimidine_HMase"/>
    <property type="match status" value="1"/>
</dbReference>
<dbReference type="Gene3D" id="3.30.572.10">
    <property type="entry name" value="Thymidylate synthase/dCMP hydroxymethylase domain"/>
    <property type="match status" value="1"/>
</dbReference>
<dbReference type="HAMAP" id="MF_00008">
    <property type="entry name" value="Thymidy_synth_bact"/>
    <property type="match status" value="1"/>
</dbReference>
<dbReference type="InterPro" id="IPR045097">
    <property type="entry name" value="Thymidate_synth/dCMP_Mease"/>
</dbReference>
<dbReference type="InterPro" id="IPR023451">
    <property type="entry name" value="Thymidate_synth/dCMP_Mease_dom"/>
</dbReference>
<dbReference type="InterPro" id="IPR036926">
    <property type="entry name" value="Thymidate_synth/dCMP_Mease_sf"/>
</dbReference>
<dbReference type="InterPro" id="IPR000398">
    <property type="entry name" value="Thymidylate_synthase"/>
</dbReference>
<dbReference type="NCBIfam" id="NF002497">
    <property type="entry name" value="PRK01827.1-3"/>
    <property type="match status" value="1"/>
</dbReference>
<dbReference type="NCBIfam" id="TIGR03284">
    <property type="entry name" value="thym_sym"/>
    <property type="match status" value="2"/>
</dbReference>
<dbReference type="PANTHER" id="PTHR11548">
    <property type="entry name" value="THYMIDYLATE SYNTHASE 1"/>
    <property type="match status" value="1"/>
</dbReference>
<dbReference type="PANTHER" id="PTHR11548:SF1">
    <property type="entry name" value="THYMIDYLATE SYNTHASE 1"/>
    <property type="match status" value="1"/>
</dbReference>
<dbReference type="Pfam" id="PF00303">
    <property type="entry name" value="Thymidylat_synt"/>
    <property type="match status" value="1"/>
</dbReference>
<dbReference type="PRINTS" id="PR00108">
    <property type="entry name" value="THYMDSNTHASE"/>
</dbReference>
<dbReference type="SUPFAM" id="SSF55831">
    <property type="entry name" value="Thymidylate synthase/dCMP hydroxymethylase"/>
    <property type="match status" value="1"/>
</dbReference>
<evidence type="ECO:0000255" key="1">
    <source>
        <dbReference type="HAMAP-Rule" id="MF_00008"/>
    </source>
</evidence>
<protein>
    <recommendedName>
        <fullName evidence="1">Thymidylate synthase</fullName>
        <shortName evidence="1">TS</shortName>
        <shortName evidence="1">TSase</shortName>
        <ecNumber evidence="1">2.1.1.45</ecNumber>
    </recommendedName>
</protein>
<comment type="function">
    <text evidence="1">Catalyzes the reductive methylation of 2'-deoxyuridine-5'-monophosphate (dUMP) to 2'-deoxythymidine-5'-monophosphate (dTMP) while utilizing 5,10-methylenetetrahydrofolate (mTHF) as the methyl donor and reductant in the reaction, yielding dihydrofolate (DHF) as a by-product. This enzymatic reaction provides an intracellular de novo source of dTMP, an essential precursor for DNA biosynthesis.</text>
</comment>
<comment type="catalytic activity">
    <reaction evidence="1">
        <text>dUMP + (6R)-5,10-methylene-5,6,7,8-tetrahydrofolate = 7,8-dihydrofolate + dTMP</text>
        <dbReference type="Rhea" id="RHEA:12104"/>
        <dbReference type="ChEBI" id="CHEBI:15636"/>
        <dbReference type="ChEBI" id="CHEBI:57451"/>
        <dbReference type="ChEBI" id="CHEBI:63528"/>
        <dbReference type="ChEBI" id="CHEBI:246422"/>
        <dbReference type="EC" id="2.1.1.45"/>
    </reaction>
</comment>
<comment type="pathway">
    <text evidence="1">Pyrimidine metabolism; dTTP biosynthesis.</text>
</comment>
<comment type="subunit">
    <text evidence="1">Homodimer.</text>
</comment>
<comment type="subcellular location">
    <subcellularLocation>
        <location evidence="1">Cytoplasm</location>
    </subcellularLocation>
</comment>
<comment type="similarity">
    <text evidence="1">Belongs to the thymidylate synthase family. Bacterial-type ThyA subfamily.</text>
</comment>